<gene>
    <name evidence="1" type="primary">proA</name>
    <name type="ordered locus">LSEI_2357</name>
</gene>
<dbReference type="EC" id="1.2.1.41" evidence="1"/>
<dbReference type="EMBL" id="CP000423">
    <property type="protein sequence ID" value="ABJ71099.1"/>
    <property type="molecule type" value="Genomic_DNA"/>
</dbReference>
<dbReference type="RefSeq" id="WP_011674871.1">
    <property type="nucleotide sequence ID" value="NC_008526.1"/>
</dbReference>
<dbReference type="RefSeq" id="YP_807541.1">
    <property type="nucleotide sequence ID" value="NC_008526.1"/>
</dbReference>
<dbReference type="SMR" id="Q035M3"/>
<dbReference type="STRING" id="321967.LSEI_2357"/>
<dbReference type="PaxDb" id="321967-LSEI_2357"/>
<dbReference type="KEGG" id="lca:LSEI_2357"/>
<dbReference type="PATRIC" id="fig|321967.11.peg.2318"/>
<dbReference type="HOGENOM" id="CLU_030231_0_0_9"/>
<dbReference type="UniPathway" id="UPA00098">
    <property type="reaction ID" value="UER00360"/>
</dbReference>
<dbReference type="Proteomes" id="UP000001651">
    <property type="component" value="Chromosome"/>
</dbReference>
<dbReference type="GO" id="GO:0005737">
    <property type="term" value="C:cytoplasm"/>
    <property type="evidence" value="ECO:0007669"/>
    <property type="project" value="UniProtKB-SubCell"/>
</dbReference>
<dbReference type="GO" id="GO:0004350">
    <property type="term" value="F:glutamate-5-semialdehyde dehydrogenase activity"/>
    <property type="evidence" value="ECO:0007669"/>
    <property type="project" value="UniProtKB-UniRule"/>
</dbReference>
<dbReference type="GO" id="GO:0050661">
    <property type="term" value="F:NADP binding"/>
    <property type="evidence" value="ECO:0007669"/>
    <property type="project" value="InterPro"/>
</dbReference>
<dbReference type="GO" id="GO:0055129">
    <property type="term" value="P:L-proline biosynthetic process"/>
    <property type="evidence" value="ECO:0007669"/>
    <property type="project" value="UniProtKB-UniRule"/>
</dbReference>
<dbReference type="CDD" id="cd07079">
    <property type="entry name" value="ALDH_F18-19_ProA-GPR"/>
    <property type="match status" value="1"/>
</dbReference>
<dbReference type="FunFam" id="3.40.309.10:FF:000006">
    <property type="entry name" value="Gamma-glutamyl phosphate reductase"/>
    <property type="match status" value="1"/>
</dbReference>
<dbReference type="Gene3D" id="3.40.605.10">
    <property type="entry name" value="Aldehyde Dehydrogenase, Chain A, domain 1"/>
    <property type="match status" value="1"/>
</dbReference>
<dbReference type="Gene3D" id="3.40.309.10">
    <property type="entry name" value="Aldehyde Dehydrogenase, Chain A, domain 2"/>
    <property type="match status" value="1"/>
</dbReference>
<dbReference type="HAMAP" id="MF_00412">
    <property type="entry name" value="ProA"/>
    <property type="match status" value="1"/>
</dbReference>
<dbReference type="InterPro" id="IPR016161">
    <property type="entry name" value="Ald_DH/histidinol_DH"/>
</dbReference>
<dbReference type="InterPro" id="IPR016163">
    <property type="entry name" value="Ald_DH_C"/>
</dbReference>
<dbReference type="InterPro" id="IPR016162">
    <property type="entry name" value="Ald_DH_N"/>
</dbReference>
<dbReference type="InterPro" id="IPR015590">
    <property type="entry name" value="Aldehyde_DH_dom"/>
</dbReference>
<dbReference type="InterPro" id="IPR020593">
    <property type="entry name" value="G-glutamylP_reductase_CS"/>
</dbReference>
<dbReference type="InterPro" id="IPR012134">
    <property type="entry name" value="Glu-5-SA_DH"/>
</dbReference>
<dbReference type="InterPro" id="IPR000965">
    <property type="entry name" value="GPR_dom"/>
</dbReference>
<dbReference type="NCBIfam" id="NF001221">
    <property type="entry name" value="PRK00197.1"/>
    <property type="match status" value="1"/>
</dbReference>
<dbReference type="NCBIfam" id="TIGR00407">
    <property type="entry name" value="proA"/>
    <property type="match status" value="1"/>
</dbReference>
<dbReference type="PANTHER" id="PTHR11063:SF8">
    <property type="entry name" value="DELTA-1-PYRROLINE-5-CARBOXYLATE SYNTHASE"/>
    <property type="match status" value="1"/>
</dbReference>
<dbReference type="PANTHER" id="PTHR11063">
    <property type="entry name" value="GLUTAMATE SEMIALDEHYDE DEHYDROGENASE"/>
    <property type="match status" value="1"/>
</dbReference>
<dbReference type="Pfam" id="PF00171">
    <property type="entry name" value="Aldedh"/>
    <property type="match status" value="2"/>
</dbReference>
<dbReference type="PIRSF" id="PIRSF000151">
    <property type="entry name" value="GPR"/>
    <property type="match status" value="1"/>
</dbReference>
<dbReference type="SUPFAM" id="SSF53720">
    <property type="entry name" value="ALDH-like"/>
    <property type="match status" value="1"/>
</dbReference>
<dbReference type="PROSITE" id="PS01223">
    <property type="entry name" value="PROA"/>
    <property type="match status" value="1"/>
</dbReference>
<accession>Q035M3</accession>
<keyword id="KW-0028">Amino-acid biosynthesis</keyword>
<keyword id="KW-0963">Cytoplasm</keyword>
<keyword id="KW-0521">NADP</keyword>
<keyword id="KW-0560">Oxidoreductase</keyword>
<keyword id="KW-0641">Proline biosynthesis</keyword>
<keyword id="KW-1185">Reference proteome</keyword>
<evidence type="ECO:0000255" key="1">
    <source>
        <dbReference type="HAMAP-Rule" id="MF_00412"/>
    </source>
</evidence>
<comment type="function">
    <text evidence="1">Catalyzes the NADPH-dependent reduction of L-glutamate 5-phosphate into L-glutamate 5-semialdehyde and phosphate. The product spontaneously undergoes cyclization to form 1-pyrroline-5-carboxylate.</text>
</comment>
<comment type="catalytic activity">
    <reaction evidence="1">
        <text>L-glutamate 5-semialdehyde + phosphate + NADP(+) = L-glutamyl 5-phosphate + NADPH + H(+)</text>
        <dbReference type="Rhea" id="RHEA:19541"/>
        <dbReference type="ChEBI" id="CHEBI:15378"/>
        <dbReference type="ChEBI" id="CHEBI:43474"/>
        <dbReference type="ChEBI" id="CHEBI:57783"/>
        <dbReference type="ChEBI" id="CHEBI:58066"/>
        <dbReference type="ChEBI" id="CHEBI:58274"/>
        <dbReference type="ChEBI" id="CHEBI:58349"/>
        <dbReference type="EC" id="1.2.1.41"/>
    </reaction>
</comment>
<comment type="pathway">
    <text evidence="1">Amino-acid biosynthesis; L-proline biosynthesis; L-glutamate 5-semialdehyde from L-glutamate: step 2/2.</text>
</comment>
<comment type="subcellular location">
    <subcellularLocation>
        <location evidence="1">Cytoplasm</location>
    </subcellularLocation>
</comment>
<comment type="similarity">
    <text evidence="1">Belongs to the gamma-glutamyl phosphate reductase family.</text>
</comment>
<organism>
    <name type="scientific">Lacticaseibacillus paracasei (strain ATCC 334 / BCRC 17002 / CCUG 31169 / CIP 107868 / KCTC 3260 / NRRL B-441)</name>
    <name type="common">Lactobacillus paracasei</name>
    <dbReference type="NCBI Taxonomy" id="321967"/>
    <lineage>
        <taxon>Bacteria</taxon>
        <taxon>Bacillati</taxon>
        <taxon>Bacillota</taxon>
        <taxon>Bacilli</taxon>
        <taxon>Lactobacillales</taxon>
        <taxon>Lactobacillaceae</taxon>
        <taxon>Lacticaseibacillus</taxon>
    </lineage>
</organism>
<name>PROA_LACP3</name>
<feature type="chain" id="PRO_0000340887" description="Gamma-glutamyl phosphate reductase">
    <location>
        <begin position="1"/>
        <end position="418"/>
    </location>
</feature>
<protein>
    <recommendedName>
        <fullName evidence="1">Gamma-glutamyl phosphate reductase</fullName>
        <shortName evidence="1">GPR</shortName>
        <ecNumber evidence="1">1.2.1.41</ecNumber>
    </recommendedName>
    <alternativeName>
        <fullName evidence="1">Glutamate-5-semialdehyde dehydrogenase</fullName>
    </alternativeName>
    <alternativeName>
        <fullName evidence="1">Glutamyl-gamma-semialdehyde dehydrogenase</fullName>
        <shortName evidence="1">GSA dehydrogenase</shortName>
    </alternativeName>
</protein>
<reference key="1">
    <citation type="journal article" date="2006" name="Proc. Natl. Acad. Sci. U.S.A.">
        <title>Comparative genomics of the lactic acid bacteria.</title>
        <authorList>
            <person name="Makarova K.S."/>
            <person name="Slesarev A."/>
            <person name="Wolf Y.I."/>
            <person name="Sorokin A."/>
            <person name="Mirkin B."/>
            <person name="Koonin E.V."/>
            <person name="Pavlov A."/>
            <person name="Pavlova N."/>
            <person name="Karamychev V."/>
            <person name="Polouchine N."/>
            <person name="Shakhova V."/>
            <person name="Grigoriev I."/>
            <person name="Lou Y."/>
            <person name="Rohksar D."/>
            <person name="Lucas S."/>
            <person name="Huang K."/>
            <person name="Goodstein D.M."/>
            <person name="Hawkins T."/>
            <person name="Plengvidhya V."/>
            <person name="Welker D."/>
            <person name="Hughes J."/>
            <person name="Goh Y."/>
            <person name="Benson A."/>
            <person name="Baldwin K."/>
            <person name="Lee J.-H."/>
            <person name="Diaz-Muniz I."/>
            <person name="Dosti B."/>
            <person name="Smeianov V."/>
            <person name="Wechter W."/>
            <person name="Barabote R."/>
            <person name="Lorca G."/>
            <person name="Altermann E."/>
            <person name="Barrangou R."/>
            <person name="Ganesan B."/>
            <person name="Xie Y."/>
            <person name="Rawsthorne H."/>
            <person name="Tamir D."/>
            <person name="Parker C."/>
            <person name="Breidt F."/>
            <person name="Broadbent J.R."/>
            <person name="Hutkins R."/>
            <person name="O'Sullivan D."/>
            <person name="Steele J."/>
            <person name="Unlu G."/>
            <person name="Saier M.H. Jr."/>
            <person name="Klaenhammer T."/>
            <person name="Richardson P."/>
            <person name="Kozyavkin S."/>
            <person name="Weimer B.C."/>
            <person name="Mills D.A."/>
        </authorList>
    </citation>
    <scope>NUCLEOTIDE SEQUENCE [LARGE SCALE GENOMIC DNA]</scope>
    <source>
        <strain>ATCC 334 / BCRC 17002 / CCUG 31169 / CIP 107868 / KCTC 3260 / NRRL B-441</strain>
    </source>
</reference>
<sequence length="418" mass="44581">MDATTIDLEQMGRAAKTAAMTLGQLTTLQKNTGLLAMAAALETHADTILAANKADLAAASALPEKFVDRLALTKARIADMAAGVRQVATLDDPTAQTDRAWVNEAGLTIAQKRVPLGVVGMIYEARPNVTVDAAALTFKSGNAVILRGGKEALHSNLALATVLQDALAAKELPRDAVQLITDPSRAVATQMMHLNGYIDVLIPRGGKGLIKAVVEQATVPVIETGAGNCHIYVDAHAQLQMAVAIVVNAKVQRPSVCNAAEKLLIHADVANEQLPVIAKALQDHGVELRGDERARAIVPSMHAATAEDWDTEYNDLIMAVKVVDSEEEAIQHINAHNTKHSEAIITDNYQNSQQFLQQVDAAVVYVNASTRFTDGYEFGFGAEIGISTQKLHARGPMGLAALTTIKYQVLGNGQIRKN</sequence>
<proteinExistence type="inferred from homology"/>